<dbReference type="EMBL" id="AF045462">
    <property type="protein sequence ID" value="AAC24810.1"/>
    <property type="molecule type" value="mRNA"/>
</dbReference>
<dbReference type="EMBL" id="AB010246">
    <property type="protein sequence ID" value="BAA24377.1"/>
    <property type="molecule type" value="mRNA"/>
</dbReference>
<dbReference type="EMBL" id="AB010247">
    <property type="protein sequence ID" value="BAA24378.1"/>
    <property type="molecule type" value="mRNA"/>
</dbReference>
<dbReference type="EMBL" id="AB010248">
    <property type="protein sequence ID" value="BAA24379.1"/>
    <property type="molecule type" value="mRNA"/>
</dbReference>
<dbReference type="EMBL" id="AB212273">
    <property type="protein sequence ID" value="BAD97682.1"/>
    <property type="molecule type" value="mRNA"/>
</dbReference>
<dbReference type="EMBL" id="D89801">
    <property type="protein sequence ID" value="BAA25416.1"/>
    <property type="molecule type" value="Genomic_DNA"/>
</dbReference>
<dbReference type="EMBL" id="AL009226">
    <property type="protein sequence ID" value="CAA15818.1"/>
    <property type="molecule type" value="Genomic_DNA"/>
</dbReference>
<dbReference type="EMBL" id="AL009226">
    <property type="protein sequence ID" value="CAA15819.1"/>
    <property type="molecule type" value="Genomic_DNA"/>
</dbReference>
<dbReference type="EMBL" id="AF100956">
    <property type="protein sequence ID" value="AAC69907.1"/>
    <property type="molecule type" value="Genomic_DNA"/>
</dbReference>
<dbReference type="EMBL" id="AK147918">
    <property type="protein sequence ID" value="BAE28228.1"/>
    <property type="molecule type" value="mRNA"/>
</dbReference>
<dbReference type="EMBL" id="AK158970">
    <property type="protein sequence ID" value="BAE34749.1"/>
    <property type="molecule type" value="mRNA"/>
</dbReference>
<dbReference type="EMBL" id="AK168525">
    <property type="protein sequence ID" value="BAE40404.1"/>
    <property type="molecule type" value="mRNA"/>
</dbReference>
<dbReference type="EMBL" id="AK220444">
    <property type="protein sequence ID" value="BAD90273.1"/>
    <property type="status" value="ALT_INIT"/>
    <property type="molecule type" value="mRNA"/>
</dbReference>
<dbReference type="EMBL" id="AF318183">
    <property type="protein sequence ID" value="AAK07919.1"/>
    <property type="molecule type" value="mRNA"/>
</dbReference>
<dbReference type="CCDS" id="CCDS28641.1">
    <molecule id="Q7JJ13-1"/>
</dbReference>
<dbReference type="RefSeq" id="NP_001191902.1">
    <molecule id="Q7JJ13-1"/>
    <property type="nucleotide sequence ID" value="NM_001204973.1"/>
</dbReference>
<dbReference type="RefSeq" id="NP_001411700.1">
    <molecule id="Q7JJ13-1"/>
    <property type="nucleotide sequence ID" value="NM_001424771.1"/>
</dbReference>
<dbReference type="RefSeq" id="NP_001411701.1">
    <molecule id="Q7JJ13-1"/>
    <property type="nucleotide sequence ID" value="NM_001424772.1"/>
</dbReference>
<dbReference type="RefSeq" id="NP_034368.2">
    <molecule id="Q7JJ13-1"/>
    <property type="nucleotide sequence ID" value="NM_010238.3"/>
</dbReference>
<dbReference type="RefSeq" id="XP_030105360.1">
    <molecule id="Q7JJ13-2"/>
    <property type="nucleotide sequence ID" value="XM_030249500.2"/>
</dbReference>
<dbReference type="SMR" id="Q7JJ13"/>
<dbReference type="BioGRID" id="199750">
    <property type="interactions" value="8"/>
</dbReference>
<dbReference type="FunCoup" id="Q7JJ13">
    <property type="interactions" value="3884"/>
</dbReference>
<dbReference type="STRING" id="10090.ENSMUSP00000025193"/>
<dbReference type="GlyGen" id="Q7JJ13">
    <property type="glycosylation" value="2 sites, 2 N-linked glycans (2 sites)"/>
</dbReference>
<dbReference type="iPTMnet" id="Q7JJ13"/>
<dbReference type="PhosphoSitePlus" id="Q7JJ13"/>
<dbReference type="jPOST" id="Q7JJ13"/>
<dbReference type="PaxDb" id="10090-ENSMUSP00000109880"/>
<dbReference type="PeptideAtlas" id="Q7JJ13"/>
<dbReference type="ProteomicsDB" id="265230">
    <molecule id="Q7JJ13-1"/>
</dbReference>
<dbReference type="ProteomicsDB" id="265231">
    <molecule id="Q7JJ13-2"/>
</dbReference>
<dbReference type="Pumba" id="Q7JJ13"/>
<dbReference type="Antibodypedia" id="28816">
    <property type="antibodies" value="414 antibodies from 39 providers"/>
</dbReference>
<dbReference type="DNASU" id="14312"/>
<dbReference type="Ensembl" id="ENSMUST00000025193.14">
    <molecule id="Q7JJ13-1"/>
    <property type="protein sequence ID" value="ENSMUSP00000025193.7"/>
    <property type="gene ID" value="ENSMUSG00000024335.21"/>
</dbReference>
<dbReference type="Ensembl" id="ENSMUST00000095347.13">
    <molecule id="Q7JJ13-2"/>
    <property type="protein sequence ID" value="ENSMUSP00000092990.8"/>
    <property type="gene ID" value="ENSMUSG00000024335.21"/>
</dbReference>
<dbReference type="Ensembl" id="ENSMUST00000114242.9">
    <molecule id="Q7JJ13-1"/>
    <property type="protein sequence ID" value="ENSMUSP00000109880.3"/>
    <property type="gene ID" value="ENSMUSG00000024335.21"/>
</dbReference>
<dbReference type="GeneID" id="14312"/>
<dbReference type="KEGG" id="mmu:14312"/>
<dbReference type="UCSC" id="uc008cbi.1">
    <molecule id="Q7JJ13-1"/>
    <property type="organism name" value="mouse"/>
</dbReference>
<dbReference type="AGR" id="MGI:99495"/>
<dbReference type="CTD" id="6046"/>
<dbReference type="MGI" id="MGI:99495">
    <property type="gene designation" value="Brd2"/>
</dbReference>
<dbReference type="VEuPathDB" id="HostDB:ENSMUSG00000024335"/>
<dbReference type="eggNOG" id="KOG1474">
    <property type="taxonomic scope" value="Eukaryota"/>
</dbReference>
<dbReference type="GeneTree" id="ENSGT00940000153385"/>
<dbReference type="HOGENOM" id="CLU_001499_0_4_1"/>
<dbReference type="InParanoid" id="Q7JJ13"/>
<dbReference type="OMA" id="GGMDQHT"/>
<dbReference type="OrthoDB" id="21449at2759"/>
<dbReference type="PhylomeDB" id="Q7JJ13"/>
<dbReference type="TreeFam" id="TF317345"/>
<dbReference type="BioGRID-ORCS" id="14312">
    <property type="hits" value="24 hits in 82 CRISPR screens"/>
</dbReference>
<dbReference type="ChiTaRS" id="Brd2">
    <property type="organism name" value="mouse"/>
</dbReference>
<dbReference type="PRO" id="PR:Q7JJ13"/>
<dbReference type="Proteomes" id="UP000000589">
    <property type="component" value="Chromosome 17"/>
</dbReference>
<dbReference type="RNAct" id="Q7JJ13">
    <property type="molecule type" value="protein"/>
</dbReference>
<dbReference type="Bgee" id="ENSMUSG00000024335">
    <property type="expression patterns" value="Expressed in embryonic post-anal tail and 297 other cell types or tissues"/>
</dbReference>
<dbReference type="ExpressionAtlas" id="Q7JJ13">
    <property type="expression patterns" value="baseline and differential"/>
</dbReference>
<dbReference type="GO" id="GO:0000785">
    <property type="term" value="C:chromatin"/>
    <property type="evidence" value="ECO:0007669"/>
    <property type="project" value="Ensembl"/>
</dbReference>
<dbReference type="GO" id="GO:0005737">
    <property type="term" value="C:cytoplasm"/>
    <property type="evidence" value="ECO:0000314"/>
    <property type="project" value="MGI"/>
</dbReference>
<dbReference type="GO" id="GO:0016607">
    <property type="term" value="C:nuclear speck"/>
    <property type="evidence" value="ECO:0007669"/>
    <property type="project" value="Ensembl"/>
</dbReference>
<dbReference type="GO" id="GO:0005634">
    <property type="term" value="C:nucleus"/>
    <property type="evidence" value="ECO:0000314"/>
    <property type="project" value="MGI"/>
</dbReference>
<dbReference type="GO" id="GO:0140033">
    <property type="term" value="F:acetylation-dependent protein binding"/>
    <property type="evidence" value="ECO:0000314"/>
    <property type="project" value="UniProtKB"/>
</dbReference>
<dbReference type="GO" id="GO:0140015">
    <property type="term" value="F:histone H3K14ac reader activity"/>
    <property type="evidence" value="ECO:0007669"/>
    <property type="project" value="Ensembl"/>
</dbReference>
<dbReference type="GO" id="GO:0140011">
    <property type="term" value="F:histone H4K12ac reader activity"/>
    <property type="evidence" value="ECO:0000314"/>
    <property type="project" value="UniProtKB"/>
</dbReference>
<dbReference type="GO" id="GO:0140012">
    <property type="term" value="F:histone H4K5ac reader activity"/>
    <property type="evidence" value="ECO:0000250"/>
    <property type="project" value="UniProtKB"/>
</dbReference>
<dbReference type="GO" id="GO:0004674">
    <property type="term" value="F:protein serine/threonine kinase activity"/>
    <property type="evidence" value="ECO:0007669"/>
    <property type="project" value="Ensembl"/>
</dbReference>
<dbReference type="GO" id="GO:0140588">
    <property type="term" value="P:chromatin looping"/>
    <property type="evidence" value="ECO:0000314"/>
    <property type="project" value="UniProtKB"/>
</dbReference>
<dbReference type="GO" id="GO:0001843">
    <property type="term" value="P:neural tube closure"/>
    <property type="evidence" value="ECO:0000315"/>
    <property type="project" value="MGI"/>
</dbReference>
<dbReference type="GO" id="GO:0006334">
    <property type="term" value="P:nucleosome assembly"/>
    <property type="evidence" value="ECO:0000250"/>
    <property type="project" value="UniProtKB"/>
</dbReference>
<dbReference type="GO" id="GO:2000330">
    <property type="term" value="P:positive regulation of T-helper 17 cell lineage commitment"/>
    <property type="evidence" value="ECO:0000314"/>
    <property type="project" value="UniProtKB"/>
</dbReference>
<dbReference type="GO" id="GO:0071168">
    <property type="term" value="P:protein localization to chromatin"/>
    <property type="evidence" value="ECO:0000314"/>
    <property type="project" value="UniProtKB"/>
</dbReference>
<dbReference type="GO" id="GO:0010468">
    <property type="term" value="P:regulation of gene expression"/>
    <property type="evidence" value="ECO:0000315"/>
    <property type="project" value="MGI"/>
</dbReference>
<dbReference type="GO" id="GO:0006357">
    <property type="term" value="P:regulation of transcription by RNA polymerase II"/>
    <property type="evidence" value="ECO:0000314"/>
    <property type="project" value="UniProtKB"/>
</dbReference>
<dbReference type="CDD" id="cd05497">
    <property type="entry name" value="Bromo_Brdt_I_like"/>
    <property type="match status" value="1"/>
</dbReference>
<dbReference type="CDD" id="cd05498">
    <property type="entry name" value="Bromo_Brdt_II_like"/>
    <property type="match status" value="1"/>
</dbReference>
<dbReference type="FunFam" id="1.20.920.10:FF:000003">
    <property type="entry name" value="Bromodomain-containing protein 2"/>
    <property type="match status" value="1"/>
</dbReference>
<dbReference type="FunFam" id="1.20.1270.220:FF:000001">
    <property type="entry name" value="bromodomain-containing protein 2 isoform X1"/>
    <property type="match status" value="1"/>
</dbReference>
<dbReference type="FunFam" id="1.20.920.10:FF:000002">
    <property type="entry name" value="Bromodomain-containing protein 4"/>
    <property type="match status" value="1"/>
</dbReference>
<dbReference type="Gene3D" id="1.20.1270.220">
    <property type="match status" value="1"/>
</dbReference>
<dbReference type="Gene3D" id="1.20.920.10">
    <property type="entry name" value="Bromodomain-like"/>
    <property type="match status" value="2"/>
</dbReference>
<dbReference type="InterPro" id="IPR043508">
    <property type="entry name" value="Bromo_Brdt_I"/>
</dbReference>
<dbReference type="InterPro" id="IPR043509">
    <property type="entry name" value="Bromo_Brdt_II"/>
</dbReference>
<dbReference type="InterPro" id="IPR050935">
    <property type="entry name" value="Bromo_chromatin_reader"/>
</dbReference>
<dbReference type="InterPro" id="IPR001487">
    <property type="entry name" value="Bromodomain"/>
</dbReference>
<dbReference type="InterPro" id="IPR036427">
    <property type="entry name" value="Bromodomain-like_sf"/>
</dbReference>
<dbReference type="InterPro" id="IPR018359">
    <property type="entry name" value="Bromodomain_CS"/>
</dbReference>
<dbReference type="InterPro" id="IPR027353">
    <property type="entry name" value="NET_dom"/>
</dbReference>
<dbReference type="InterPro" id="IPR038336">
    <property type="entry name" value="NET_sf"/>
</dbReference>
<dbReference type="PANTHER" id="PTHR22880:SF240">
    <property type="entry name" value="BROMODOMAIN-CONTAINING PROTEIN 2"/>
    <property type="match status" value="1"/>
</dbReference>
<dbReference type="PANTHER" id="PTHR22880">
    <property type="entry name" value="FALZ-RELATED BROMODOMAIN-CONTAINING PROTEINS"/>
    <property type="match status" value="1"/>
</dbReference>
<dbReference type="Pfam" id="PF17035">
    <property type="entry name" value="BET"/>
    <property type="match status" value="1"/>
</dbReference>
<dbReference type="Pfam" id="PF00439">
    <property type="entry name" value="Bromodomain"/>
    <property type="match status" value="2"/>
</dbReference>
<dbReference type="PRINTS" id="PR00503">
    <property type="entry name" value="BROMODOMAIN"/>
</dbReference>
<dbReference type="SMART" id="SM00297">
    <property type="entry name" value="BROMO"/>
    <property type="match status" value="2"/>
</dbReference>
<dbReference type="SUPFAM" id="SSF47370">
    <property type="entry name" value="Bromodomain"/>
    <property type="match status" value="2"/>
</dbReference>
<dbReference type="PROSITE" id="PS00633">
    <property type="entry name" value="BROMODOMAIN_1"/>
    <property type="match status" value="2"/>
</dbReference>
<dbReference type="PROSITE" id="PS50014">
    <property type="entry name" value="BROMODOMAIN_2"/>
    <property type="match status" value="2"/>
</dbReference>
<dbReference type="PROSITE" id="PS51525">
    <property type="entry name" value="NET"/>
    <property type="match status" value="1"/>
</dbReference>
<name>BRD2_MOUSE</name>
<feature type="chain" id="PRO_0000274005" description="Bromodomain-containing protein 2">
    <location>
        <begin position="1"/>
        <end position="798"/>
    </location>
</feature>
<feature type="domain" description="Bromo 1" evidence="3">
    <location>
        <begin position="73"/>
        <end position="179"/>
    </location>
</feature>
<feature type="domain" description="Bromo 2" evidence="3">
    <location>
        <begin position="343"/>
        <end position="452"/>
    </location>
</feature>
<feature type="domain" description="NET" evidence="4">
    <location>
        <begin position="630"/>
        <end position="712"/>
    </location>
</feature>
<feature type="region of interest" description="Disordered" evidence="5">
    <location>
        <begin position="1"/>
        <end position="21"/>
    </location>
</feature>
<feature type="region of interest" description="Disordered" evidence="5">
    <location>
        <begin position="53"/>
        <end position="72"/>
    </location>
</feature>
<feature type="region of interest" description="Disordered" evidence="5">
    <location>
        <begin position="267"/>
        <end position="348"/>
    </location>
</feature>
<feature type="region of interest" description="Disordered" evidence="5">
    <location>
        <begin position="454"/>
        <end position="645"/>
    </location>
</feature>
<feature type="region of interest" description="Disordered" evidence="5">
    <location>
        <begin position="736"/>
        <end position="798"/>
    </location>
</feature>
<feature type="short sequence motif" description="Nuclear localization signal" evidence="2">
    <location>
        <begin position="553"/>
        <end position="557"/>
    </location>
</feature>
<feature type="compositionally biased region" description="Low complexity" evidence="5">
    <location>
        <begin position="284"/>
        <end position="297"/>
    </location>
</feature>
<feature type="compositionally biased region" description="Basic and acidic residues" evidence="5">
    <location>
        <begin position="315"/>
        <end position="331"/>
    </location>
</feature>
<feature type="compositionally biased region" description="Acidic residues" evidence="5">
    <location>
        <begin position="480"/>
        <end position="512"/>
    </location>
</feature>
<feature type="compositionally biased region" description="Basic residues" evidence="5">
    <location>
        <begin position="542"/>
        <end position="564"/>
    </location>
</feature>
<feature type="compositionally biased region" description="Low complexity" evidence="5">
    <location>
        <begin position="772"/>
        <end position="792"/>
    </location>
</feature>
<feature type="binding site" evidence="1">
    <location>
        <position position="111"/>
    </location>
    <ligand>
        <name>a protein</name>
        <dbReference type="ChEBI" id="CHEBI:16541"/>
    </ligand>
    <ligandPart>
        <name>N(6)-acetyl-N(6)-methyl-L-lysine residue</name>
        <dbReference type="ChEBI" id="CHEBI:197459"/>
    </ligandPart>
</feature>
<feature type="binding site" evidence="1">
    <location>
        <position position="154"/>
    </location>
    <ligand>
        <name>a protein</name>
        <dbReference type="ChEBI" id="CHEBI:16541"/>
    </ligand>
    <ligandPart>
        <name>N(6)-acetyl-N(6)-methyl-L-lysine residue</name>
        <dbReference type="ChEBI" id="CHEBI:197459"/>
    </ligandPart>
</feature>
<feature type="binding site" evidence="1">
    <location>
        <position position="155"/>
    </location>
    <ligand>
        <name>a protein</name>
        <dbReference type="ChEBI" id="CHEBI:16541"/>
    </ligand>
    <ligandPart>
        <name>N(6)-acetyl-L-lysine residue</name>
        <dbReference type="ChEBI" id="CHEBI:61930"/>
    </ligandPart>
</feature>
<feature type="binding site" evidence="1">
    <location>
        <position position="155"/>
    </location>
    <ligand>
        <name>a protein</name>
        <dbReference type="ChEBI" id="CHEBI:16541"/>
    </ligand>
    <ligandPart>
        <name>N(6)-acetyl-N(6)-methyl-L-lysine residue</name>
        <dbReference type="ChEBI" id="CHEBI:197459"/>
    </ligandPart>
</feature>
<feature type="binding site" evidence="1">
    <location>
        <position position="156"/>
    </location>
    <ligand>
        <name>a protein</name>
        <dbReference type="ChEBI" id="CHEBI:16541"/>
    </ligand>
    <ligandPart>
        <name>N(6)-acetyl-N(6)-methyl-L-lysine residue</name>
        <dbReference type="ChEBI" id="CHEBI:197459"/>
    </ligandPart>
</feature>
<feature type="binding site" evidence="1">
    <location>
        <position position="159"/>
    </location>
    <ligand>
        <name>a protein</name>
        <dbReference type="ChEBI" id="CHEBI:16541"/>
    </ligand>
    <ligandPart>
        <name>N(6)-acetyl-L-lysine residue</name>
        <dbReference type="ChEBI" id="CHEBI:61930"/>
    </ligandPart>
</feature>
<feature type="binding site" evidence="1">
    <location>
        <position position="160"/>
    </location>
    <ligand>
        <name>a protein</name>
        <dbReference type="ChEBI" id="CHEBI:16541"/>
    </ligand>
    <ligandPart>
        <name>N(6)-acetyl-L-lysine residue</name>
        <dbReference type="ChEBI" id="CHEBI:61930"/>
    </ligandPart>
</feature>
<feature type="modified residue" description="N-acetylmethionine" evidence="1">
    <location>
        <position position="1"/>
    </location>
</feature>
<feature type="modified residue" description="Phosphothreonine" evidence="1">
    <location>
        <position position="6"/>
    </location>
</feature>
<feature type="modified residue" description="Phosphoserine" evidence="1">
    <location>
        <position position="36"/>
    </location>
</feature>
<feature type="modified residue" description="Phosphoserine" evidence="18 19">
    <location>
        <position position="297"/>
    </location>
</feature>
<feature type="modified residue" description="Phosphoserine" evidence="18 19">
    <location>
        <position position="300"/>
    </location>
</feature>
<feature type="modified residue" description="Phosphoserine" evidence="19">
    <location>
        <position position="304"/>
    </location>
</feature>
<feature type="modified residue" description="Phosphoserine" evidence="1">
    <location>
        <position position="631"/>
    </location>
</feature>
<feature type="splice variant" id="VSP_022601" description="In isoform 2." evidence="14">
    <location>
        <begin position="1"/>
        <end position="46"/>
    </location>
</feature>
<feature type="mutagenesis site" description="In BD1-m4 mutant; reduced binding to histone H4 acetylated at 'Lys-12' (H4K12ac); when associated with A-112, A-154 and A-161. In m8 mutant; abolished binding to histone H4 acetylated at 'Lys-12' (H4K12ac); when associated with A-112, A-154, A-161, A-375, A-385, A-427 and A-434." evidence="6">
    <original>V</original>
    <variation>A</variation>
    <location>
        <position position="102"/>
    </location>
</feature>
<feature type="mutagenesis site" description="In BD1-m4 mutant; reduced binding to histone H4 acetylated at 'Lys-12' (H4K12ac); when associated with A-102, A-154 and A-161. In m8 mutant; abolished binding to histone H4 acetylated at 'Lys-12' (H4K12ac); when associated with A-102, A-154, A-161, A-375, A-385, A-427 and A-434." evidence="6">
    <original>Y</original>
    <variation>A</variation>
    <location>
        <position position="112"/>
    </location>
</feature>
<feature type="mutagenesis site" description="In BD1-m4 mutant; reduced binding to histone H4 acetylated at 'Lys-12' (H4K12ac); when associated with A-102, A-112 and A-161. In m8 mutant; abolished binding to histone H4 acetylated at 'Lys-12' (H4K12ac); when associated with A-102, A-112, A-161, A-375, A-385, A-427 and A-434." evidence="6">
    <original>Y</original>
    <variation>A</variation>
    <location>
        <position position="154"/>
    </location>
</feature>
<feature type="mutagenesis site" description="Abolished interaction with acetylated STAT3." evidence="9">
    <original>Y</original>
    <variation>F</variation>
    <location>
        <position position="154"/>
    </location>
</feature>
<feature type="mutagenesis site" description="In BD1-m4 mutant; reduced binding to histone H4 acetylated at 'Lys-12' (H4K12ac); when associated with A-102, A-112 and A-154. In m8 mutant; abolished binding to histone H4 acetylated at 'Lys-12' (H4K12ac); when associated with A-102, A-112, A-161, A-375, A-385, A-427 and A-434." evidence="6">
    <original>I</original>
    <variation>A</variation>
    <location>
        <position position="161"/>
    </location>
</feature>
<feature type="mutagenesis site" description="In BD2-m4 mutant; reduced binding to histone H4 acetylated at 'Lys-12' (H4K12ac); when associated with A-385, A-427 and A-434. In m8 mutant; abolished binding to histone H4 acetylated at 'Lys-12' (H4K12ac); when associated with A-102, A-112, A-154, A-161, A-385, A-427 and A-434." evidence="6">
    <original>V</original>
    <variation>A</variation>
    <location>
        <position position="375"/>
    </location>
</feature>
<feature type="mutagenesis site" description="In BD2-m4 mutant; reduced binding to histone H4 acetylated at 'Lys-12' (H4K12ac); when associated with A-375, A-427 and A-434. In m8 mutant; abolished binding to histone H4 acetylated at 'Lys-12' (H4K12ac); when associated with A-102, A-112, A-154, A-161, A-375, A-427 and A-434." evidence="6">
    <original>Y</original>
    <variation>A</variation>
    <location>
        <position position="385"/>
    </location>
</feature>
<feature type="mutagenesis site" description="In BD2-m4 mutant; reduced binding to histone H4 acetylated at 'Lys-12' (H4K12ac); when associated with A-375, A-385 and A-434. In m8 mutant; abolished binding to histone H4 acetylated at 'Lys-12' (H4K12ac); when associated with A-102, A-112, A-154, A-161, A-375, A-385 and A-434." evidence="6">
    <original>Y</original>
    <variation>A</variation>
    <location>
        <position position="427"/>
    </location>
</feature>
<feature type="mutagenesis site" description="Abolished interaction with acetylated STAT3." evidence="9">
    <original>Y</original>
    <variation>F</variation>
    <location>
        <position position="427"/>
    </location>
</feature>
<feature type="mutagenesis site" description="In BD2-m4 mutant; reduced binding to histone H4 acetylated at 'Lys-12' (H4K12ac); when associated with A-375, A-385 and A-427. In m8 mutant; abolished binding to histone H4 acetylated at 'Lys-12' (H4K12ac); when associated with A-102, A-112, A-154, A-161, A-375, A-385, and A-427434." evidence="6">
    <original>V</original>
    <variation>A</variation>
    <location>
        <position position="434"/>
    </location>
</feature>
<feature type="sequence conflict" description="In Ref. 5; BAE28228." evidence="16" ref="5">
    <original>E</original>
    <variation>K</variation>
    <location>
        <position position="169"/>
    </location>
</feature>
<feature type="sequence conflict" description="In Ref. 1; AAC24810." evidence="16" ref="1">
    <original>A</original>
    <variation>G</variation>
    <location>
        <position position="199"/>
    </location>
</feature>
<feature type="sequence conflict" description="In Ref. 6; BAD90273." evidence="16" ref="6">
    <original>P</original>
    <variation>L</variation>
    <location>
        <position position="691"/>
    </location>
</feature>
<feature type="sequence conflict" description="In Ref. 1; AAC24810." evidence="16" ref="1">
    <original>QVA</original>
    <variation>LVP</variation>
    <location>
        <begin position="765"/>
        <end position="767"/>
    </location>
</feature>
<evidence type="ECO:0000250" key="1">
    <source>
        <dbReference type="UniProtKB" id="P25440"/>
    </source>
</evidence>
<evidence type="ECO:0000255" key="2"/>
<evidence type="ECO:0000255" key="3">
    <source>
        <dbReference type="PROSITE-ProRule" id="PRU00035"/>
    </source>
</evidence>
<evidence type="ECO:0000255" key="4">
    <source>
        <dbReference type="PROSITE-ProRule" id="PRU00857"/>
    </source>
</evidence>
<evidence type="ECO:0000256" key="5">
    <source>
        <dbReference type="SAM" id="MobiDB-lite"/>
    </source>
</evidence>
<evidence type="ECO:0000269" key="6">
    <source>
    </source>
</evidence>
<evidence type="ECO:0000269" key="7">
    <source>
    </source>
</evidence>
<evidence type="ECO:0000269" key="8">
    <source>
    </source>
</evidence>
<evidence type="ECO:0000269" key="9">
    <source>
    </source>
</evidence>
<evidence type="ECO:0000269" key="10">
    <source>
    </source>
</evidence>
<evidence type="ECO:0000269" key="11">
    <source>
    </source>
</evidence>
<evidence type="ECO:0000269" key="12">
    <source>
    </source>
</evidence>
<evidence type="ECO:0000303" key="13">
    <source>
    </source>
</evidence>
<evidence type="ECO:0000303" key="14">
    <source>
    </source>
</evidence>
<evidence type="ECO:0000303" key="15">
    <source>
    </source>
</evidence>
<evidence type="ECO:0000305" key="16"/>
<evidence type="ECO:0000312" key="17">
    <source>
        <dbReference type="MGI" id="MGI:99495"/>
    </source>
</evidence>
<evidence type="ECO:0007744" key="18">
    <source>
    </source>
</evidence>
<evidence type="ECO:0007744" key="19">
    <source>
    </source>
</evidence>
<sequence length="798" mass="88067">MLQNVTPHKLPGEGNAGLLGLGPEAAAPGKRIRKPSLLYEGFESPTMASVPALQLAPANPPPPEVSNPKKPGRVTNQLQYLHKVVMKALWKHQFAWPFRQPVDAVKLGLPDYHKIIKQPMDMGTIKRRLENNYYWAASECMQDFNTMFTNCYIYNKPTDDIVLMAQTLEKIFLQKVASMPQEEQELVVTIPKNSHKKGAKLAALQGSITSAHQVPAVSSVSHTALYTPPPEIPTTVLNIPHPSVISSPLLKSLHSAGPPLLAVSAAPPAQPLAKKKGVKRKADTTTPTPTAILAPGSPASPPGSLEPKAARLPPMRRESGRPIKPPRKDLPDSQQQHQSSKKGKLSEQLKHCNGILKELLSKKHAAYAWPFYKPVDASALGLHDYHDIIKHPMDLSTVKRKMENRDYRDAQEFAADVRLMFSNCYKYNPPDHDVVAMARKLQDVFEFRYAKMPDEPLEPGPLPVSTALPPGLTKSSSESSSEESSSESSSEEEEEEEEDEDEEESESSDSEEERAHRLAELQEQLRAVHEQLAALSQGPISKPKRKREKKEKKKKRKAEKHRGRIGIDEDDKGPRAPRPPQPKKSKKAGGGGSNATTLSHPGFGTSGGSSNKLPKKSQKTAPPVLPTGYDSEEEEESRPMSYDEKRQLSLDINKLPGEKLGRVVHIIQAREPSLRDSNPEEIEIDFETLKPSTLRELERYVLSCLRKKPRKPYTIRKPVGKTKEELALEKKRELEKRLQDVSGQLNSTKKPPKKASEKTESSAQQVAVSRLSASSSSSDSSSSSSSSSSSDTSDSDSG</sequence>
<keyword id="KW-0007">Acetylation</keyword>
<keyword id="KW-0025">Alternative splicing</keyword>
<keyword id="KW-0103">Bromodomain</keyword>
<keyword id="KW-0156">Chromatin regulator</keyword>
<keyword id="KW-0158">Chromosome</keyword>
<keyword id="KW-0539">Nucleus</keyword>
<keyword id="KW-0597">Phosphoprotein</keyword>
<keyword id="KW-1185">Reference proteome</keyword>
<keyword id="KW-0677">Repeat</keyword>
<keyword id="KW-0804">Transcription</keyword>
<keyword id="KW-0805">Transcription regulation</keyword>
<accession>Q7JJ13</accession>
<accession>O54795</accession>
<accession>O88411</accession>
<accession>Q3UGI0</accession>
<accession>Q5DTS6</accession>
<accession>Q794H7</accession>
<accession>Q794H9</accession>
<accession>Q99PC5</accession>
<reference key="1">
    <citation type="journal article" date="1998" name="J. Cell Sci.">
        <title>Expression and potential role of Fsrg1, a murine bromodomain-containing homologue of the Drosophila gene female sterile homeotic.</title>
        <authorList>
            <person name="Rhee K."/>
            <person name="Brunori M."/>
            <person name="Besset V."/>
            <person name="Trousdale R."/>
            <person name="Wolgemuth D.J."/>
        </authorList>
    </citation>
    <scope>NUCLEOTIDE SEQUENCE [MRNA]</scope>
    <scope>TISSUE SPECIFICITY</scope>
    <scope>SUBCELLULAR LOCATION</scope>
    <source>
        <tissue>Testis</tissue>
    </source>
</reference>
<reference key="2">
    <citation type="journal article" date="1998" name="Genomics">
        <title>Nucleotide sequence of the ring3 gene in the class II region of the mouse MHC and its abundant expression in testicular germ cells.</title>
        <authorList>
            <person name="Taniguchi Y."/>
            <person name="Matsuzaka Y."/>
            <person name="Fujimoto H."/>
            <person name="Miyado K."/>
            <person name="Kohda A."/>
            <person name="Okumura K."/>
            <person name="Kimura M."/>
            <person name="Inoko H."/>
        </authorList>
    </citation>
    <scope>NUCLEOTIDE SEQUENCE [GENOMIC DNA / MRNA] (ISOFORM 1)</scope>
    <scope>NUCLEOTIDE SEQUENCE [GENOMIC DNA / MRNA] OF 1-549 (ISOFORM 2)</scope>
    <scope>TISSUE SPECIFICITY</scope>
    <scope>SUBCELLULAR LOCATION</scope>
    <source>
        <strain>129/SvJ</strain>
        <strain>CD-1</strain>
        <tissue>Testis</tissue>
    </source>
</reference>
<reference key="3">
    <citation type="journal article" date="1998" name="Immunogenetics">
        <title>DNA sequence and structure of the mouse RING3 gene: identification of variant RING3 transcripts.</title>
        <authorList>
            <person name="Thorpe K.L."/>
            <person name="Beck S."/>
        </authorList>
    </citation>
    <scope>NUCLEOTIDE SEQUENCE [GENOMIC DNA]</scope>
</reference>
<reference key="4">
    <citation type="submission" date="1998-10" db="EMBL/GenBank/DDBJ databases">
        <title>Sequence of the mouse major histocompatibility locus class II region.</title>
        <authorList>
            <person name="Rowen L."/>
            <person name="Qin S."/>
            <person name="Madan A."/>
            <person name="Loretz C."/>
            <person name="James R."/>
            <person name="Dors M."/>
            <person name="Mix L."/>
            <person name="Hall J."/>
            <person name="Lasky S."/>
            <person name="Hood L."/>
        </authorList>
    </citation>
    <scope>NUCLEOTIDE SEQUENCE [LARGE SCALE GENOMIC DNA]</scope>
    <source>
        <strain>129/SvJ</strain>
    </source>
</reference>
<reference key="5">
    <citation type="journal article" date="2005" name="Science">
        <title>The transcriptional landscape of the mammalian genome.</title>
        <authorList>
            <person name="Carninci P."/>
            <person name="Kasukawa T."/>
            <person name="Katayama S."/>
            <person name="Gough J."/>
            <person name="Frith M.C."/>
            <person name="Maeda N."/>
            <person name="Oyama R."/>
            <person name="Ravasi T."/>
            <person name="Lenhard B."/>
            <person name="Wells C."/>
            <person name="Kodzius R."/>
            <person name="Shimokawa K."/>
            <person name="Bajic V.B."/>
            <person name="Brenner S.E."/>
            <person name="Batalov S."/>
            <person name="Forrest A.R."/>
            <person name="Zavolan M."/>
            <person name="Davis M.J."/>
            <person name="Wilming L.G."/>
            <person name="Aidinis V."/>
            <person name="Allen J.E."/>
            <person name="Ambesi-Impiombato A."/>
            <person name="Apweiler R."/>
            <person name="Aturaliya R.N."/>
            <person name="Bailey T.L."/>
            <person name="Bansal M."/>
            <person name="Baxter L."/>
            <person name="Beisel K.W."/>
            <person name="Bersano T."/>
            <person name="Bono H."/>
            <person name="Chalk A.M."/>
            <person name="Chiu K.P."/>
            <person name="Choudhary V."/>
            <person name="Christoffels A."/>
            <person name="Clutterbuck D.R."/>
            <person name="Crowe M.L."/>
            <person name="Dalla E."/>
            <person name="Dalrymple B.P."/>
            <person name="de Bono B."/>
            <person name="Della Gatta G."/>
            <person name="di Bernardo D."/>
            <person name="Down T."/>
            <person name="Engstrom P."/>
            <person name="Fagiolini M."/>
            <person name="Faulkner G."/>
            <person name="Fletcher C.F."/>
            <person name="Fukushima T."/>
            <person name="Furuno M."/>
            <person name="Futaki S."/>
            <person name="Gariboldi M."/>
            <person name="Georgii-Hemming P."/>
            <person name="Gingeras T.R."/>
            <person name="Gojobori T."/>
            <person name="Green R.E."/>
            <person name="Gustincich S."/>
            <person name="Harbers M."/>
            <person name="Hayashi Y."/>
            <person name="Hensch T.K."/>
            <person name="Hirokawa N."/>
            <person name="Hill D."/>
            <person name="Huminiecki L."/>
            <person name="Iacono M."/>
            <person name="Ikeo K."/>
            <person name="Iwama A."/>
            <person name="Ishikawa T."/>
            <person name="Jakt M."/>
            <person name="Kanapin A."/>
            <person name="Katoh M."/>
            <person name="Kawasawa Y."/>
            <person name="Kelso J."/>
            <person name="Kitamura H."/>
            <person name="Kitano H."/>
            <person name="Kollias G."/>
            <person name="Krishnan S.P."/>
            <person name="Kruger A."/>
            <person name="Kummerfeld S.K."/>
            <person name="Kurochkin I.V."/>
            <person name="Lareau L.F."/>
            <person name="Lazarevic D."/>
            <person name="Lipovich L."/>
            <person name="Liu J."/>
            <person name="Liuni S."/>
            <person name="McWilliam S."/>
            <person name="Madan Babu M."/>
            <person name="Madera M."/>
            <person name="Marchionni L."/>
            <person name="Matsuda H."/>
            <person name="Matsuzawa S."/>
            <person name="Miki H."/>
            <person name="Mignone F."/>
            <person name="Miyake S."/>
            <person name="Morris K."/>
            <person name="Mottagui-Tabar S."/>
            <person name="Mulder N."/>
            <person name="Nakano N."/>
            <person name="Nakauchi H."/>
            <person name="Ng P."/>
            <person name="Nilsson R."/>
            <person name="Nishiguchi S."/>
            <person name="Nishikawa S."/>
            <person name="Nori F."/>
            <person name="Ohara O."/>
            <person name="Okazaki Y."/>
            <person name="Orlando V."/>
            <person name="Pang K.C."/>
            <person name="Pavan W.J."/>
            <person name="Pavesi G."/>
            <person name="Pesole G."/>
            <person name="Petrovsky N."/>
            <person name="Piazza S."/>
            <person name="Reed J."/>
            <person name="Reid J.F."/>
            <person name="Ring B.Z."/>
            <person name="Ringwald M."/>
            <person name="Rost B."/>
            <person name="Ruan Y."/>
            <person name="Salzberg S.L."/>
            <person name="Sandelin A."/>
            <person name="Schneider C."/>
            <person name="Schoenbach C."/>
            <person name="Sekiguchi K."/>
            <person name="Semple C.A."/>
            <person name="Seno S."/>
            <person name="Sessa L."/>
            <person name="Sheng Y."/>
            <person name="Shibata Y."/>
            <person name="Shimada H."/>
            <person name="Shimada K."/>
            <person name="Silva D."/>
            <person name="Sinclair B."/>
            <person name="Sperling S."/>
            <person name="Stupka E."/>
            <person name="Sugiura K."/>
            <person name="Sultana R."/>
            <person name="Takenaka Y."/>
            <person name="Taki K."/>
            <person name="Tammoja K."/>
            <person name="Tan S.L."/>
            <person name="Tang S."/>
            <person name="Taylor M.S."/>
            <person name="Tegner J."/>
            <person name="Teichmann S.A."/>
            <person name="Ueda H.R."/>
            <person name="van Nimwegen E."/>
            <person name="Verardo R."/>
            <person name="Wei C.L."/>
            <person name="Yagi K."/>
            <person name="Yamanishi H."/>
            <person name="Zabarovsky E."/>
            <person name="Zhu S."/>
            <person name="Zimmer A."/>
            <person name="Hide W."/>
            <person name="Bult C."/>
            <person name="Grimmond S.M."/>
            <person name="Teasdale R.D."/>
            <person name="Liu E.T."/>
            <person name="Brusic V."/>
            <person name="Quackenbush J."/>
            <person name="Wahlestedt C."/>
            <person name="Mattick J.S."/>
            <person name="Hume D.A."/>
            <person name="Kai C."/>
            <person name="Sasaki D."/>
            <person name="Tomaru Y."/>
            <person name="Fukuda S."/>
            <person name="Kanamori-Katayama M."/>
            <person name="Suzuki M."/>
            <person name="Aoki J."/>
            <person name="Arakawa T."/>
            <person name="Iida J."/>
            <person name="Imamura K."/>
            <person name="Itoh M."/>
            <person name="Kato T."/>
            <person name="Kawaji H."/>
            <person name="Kawagashira N."/>
            <person name="Kawashima T."/>
            <person name="Kojima M."/>
            <person name="Kondo S."/>
            <person name="Konno H."/>
            <person name="Nakano K."/>
            <person name="Ninomiya N."/>
            <person name="Nishio T."/>
            <person name="Okada M."/>
            <person name="Plessy C."/>
            <person name="Shibata K."/>
            <person name="Shiraki T."/>
            <person name="Suzuki S."/>
            <person name="Tagami M."/>
            <person name="Waki K."/>
            <person name="Watahiki A."/>
            <person name="Okamura-Oho Y."/>
            <person name="Suzuki H."/>
            <person name="Kawai J."/>
            <person name="Hayashizaki Y."/>
        </authorList>
    </citation>
    <scope>NUCLEOTIDE SEQUENCE [LARGE SCALE MRNA]</scope>
    <source>
        <strain>C57BL/6J</strain>
        <tissue>Amnion</tissue>
        <tissue>Visual cortex</tissue>
    </source>
</reference>
<reference key="6">
    <citation type="submission" date="2005-02" db="EMBL/GenBank/DDBJ databases">
        <title>Prediction of the coding sequences of mouse homologues of KIAA gene. The complete nucleotide sequences of mouse KIAA-homologous cDNAs identified by screening of terminal sequences of cDNA clones randomly sampled from size-fractionated libraries.</title>
        <authorList>
            <person name="Okazaki N."/>
            <person name="Kikuno R.F."/>
            <person name="Ohara R."/>
            <person name="Inamoto S."/>
            <person name="Nagase T."/>
            <person name="Ohara O."/>
            <person name="Koga H."/>
        </authorList>
    </citation>
    <scope>NUCLEOTIDE SEQUENCE [LARGE SCALE MRNA]</scope>
    <source>
        <tissue>Fetal brain</tissue>
    </source>
</reference>
<reference key="7">
    <citation type="submission" date="2000-11" db="EMBL/GenBank/DDBJ databases">
        <title>Complete sequence of UL26B06.</title>
        <authorList>
            <person name="Korf I."/>
        </authorList>
    </citation>
    <scope>NUCLEOTIDE SEQUENCE [MRNA] OF 1-503</scope>
    <source>
        <strain>C57BL/6J</strain>
    </source>
</reference>
<reference key="8">
    <citation type="journal article" date="2004" name="Mol. Cell">
        <title>Selective recognition of acetylated histones by bromodomain proteins visualized in living cells.</title>
        <authorList>
            <person name="Kanno T."/>
            <person name="Kanno Y."/>
            <person name="Siegel R.M."/>
            <person name="Jang M.K."/>
            <person name="Lenardo M.J."/>
            <person name="Ozato K."/>
        </authorList>
    </citation>
    <scope>FUNCTION</scope>
    <scope>MUTAGENESIS OF VAL-102; TYR-112; TYR-154; ILE-161; VAL-375; TYR-385; TYR-427 AND VAL-434</scope>
</reference>
<reference key="9">
    <citation type="journal article" date="2007" name="Proc. Natl. Acad. Sci. U.S.A.">
        <title>Large-scale phosphorylation analysis of mouse liver.</title>
        <authorList>
            <person name="Villen J."/>
            <person name="Beausoleil S.A."/>
            <person name="Gerber S.A."/>
            <person name="Gygi S.P."/>
        </authorList>
    </citation>
    <scope>PHOSPHORYLATION [LARGE SCALE ANALYSIS] AT SER-297 AND SER-300</scope>
    <scope>IDENTIFICATION BY MASS SPECTROMETRY [LARGE SCALE ANALYSIS]</scope>
    <source>
        <tissue>Liver</tissue>
    </source>
</reference>
<reference key="10">
    <citation type="journal article" date="2009" name="Biochem. J.">
        <title>Brd2 disruption in mice causes severe obesity without Type 2 diabetes.</title>
        <authorList>
            <person name="Wang F."/>
            <person name="Liu H."/>
            <person name="Blanton W.P."/>
            <person name="Belkina A."/>
            <person name="Lebrasseur N.K."/>
            <person name="Denis G.V."/>
        </authorList>
    </citation>
    <scope>DISRUPTION PHENOTYPE</scope>
</reference>
<reference key="11">
    <citation type="journal article" date="2009" name="Dev. Dyn.">
        <title>Double bromodomain-containing gene Brd2 is essential for embryonic development in mouse.</title>
        <authorList>
            <person name="Shang E."/>
            <person name="Wang X."/>
            <person name="Wen D."/>
            <person name="Greenberg D.A."/>
            <person name="Wolgemuth D.J."/>
        </authorList>
    </citation>
    <scope>DISRUPTION PHENOTYPE</scope>
</reference>
<reference key="12">
    <citation type="journal article" date="2010" name="Cell">
        <title>A tissue-specific atlas of mouse protein phosphorylation and expression.</title>
        <authorList>
            <person name="Huttlin E.L."/>
            <person name="Jedrychowski M.P."/>
            <person name="Elias J.E."/>
            <person name="Goswami T."/>
            <person name="Rad R."/>
            <person name="Beausoleil S.A."/>
            <person name="Villen J."/>
            <person name="Haas W."/>
            <person name="Sowa M.E."/>
            <person name="Gygi S.P."/>
        </authorList>
    </citation>
    <scope>PHOSPHORYLATION [LARGE SCALE ANALYSIS] AT SER-297; SER-300 AND SER-304</scope>
    <scope>IDENTIFICATION BY MASS SPECTROMETRY [LARGE SCALE ANALYSIS]</scope>
    <source>
        <tissue>Brain</tissue>
        <tissue>Kidney</tissue>
        <tissue>Liver</tissue>
        <tissue>Pancreas</tissue>
        <tissue>Spleen</tissue>
        <tissue>Testis</tissue>
    </source>
</reference>
<reference key="13">
    <citation type="journal article" date="2017" name="Mol. Cell">
        <title>Distinct roles of Brd2 and Brd4 in potentiating the transcriptional program for th17 cell differentiation.</title>
        <authorList>
            <person name="Cheung K.L."/>
            <person name="Zhang F."/>
            <person name="Jaganathan A."/>
            <person name="Sharma R."/>
            <person name="Zhang Q."/>
            <person name="Konuma T."/>
            <person name="Shen T."/>
            <person name="Lee J.Y."/>
            <person name="Ren C."/>
            <person name="Chen C.H."/>
            <person name="Lu G."/>
            <person name="Olson M.R."/>
            <person name="Zhang W."/>
            <person name="Kaplan M.H."/>
            <person name="Littman D.R."/>
            <person name="Walsh M.J."/>
            <person name="Xiong H."/>
            <person name="Zeng L."/>
            <person name="Zhou M.M."/>
        </authorList>
    </citation>
    <scope>FUNCTION</scope>
    <scope>INTERACTION WITH STAT3</scope>
    <scope>MUTAGENESIS OF TYR-154 AND TYR-427</scope>
</reference>
<reference key="14">
    <citation type="journal article" date="2017" name="Mol. Cell">
        <title>The BET protein BRD2 cooperates with CTCF to enforce transcriptional and architectural boundaries.</title>
        <authorList>
            <person name="Hsu S.C."/>
            <person name="Gilgenast T.G."/>
            <person name="Bartman C.R."/>
            <person name="Edwards C.R."/>
            <person name="Stonestrom A.J."/>
            <person name="Huang P."/>
            <person name="Emerson D.J."/>
            <person name="Evans P."/>
            <person name="Werner M.T."/>
            <person name="Keller C.A."/>
            <person name="Giardine B."/>
            <person name="Hardison R.C."/>
            <person name="Raj A."/>
            <person name="Phillips-Cremins J.E."/>
            <person name="Blobel G.A."/>
        </authorList>
    </citation>
    <scope>FUNCTION</scope>
    <scope>SUBCELLULAR LOCATION</scope>
    <scope>INTERACTION WITH CTCF</scope>
</reference>
<gene>
    <name evidence="13 17" type="primary">Brd2</name>
    <name evidence="15" type="synonym">Fsrg1</name>
    <name type="synonym">Kiaa4005</name>
    <name evidence="14" type="synonym">Ring3</name>
</gene>
<protein>
    <recommendedName>
        <fullName>Bromodomain-containing protein 2</fullName>
    </recommendedName>
    <alternativeName>
        <fullName evidence="15">Female sterile homeotic-related protein 1</fullName>
        <shortName evidence="15">Fsrg-1</shortName>
    </alternativeName>
</protein>
<comment type="function">
    <text evidence="1 6 9 10">Chromatin reader protein that specifically recognizes and binds histone H4 acetylated at 'Lys-5' and 'Lys-12' (H4K5ac and H4K12ac, respectively), thereby controlling gene expression and remodeling chromatin structures (PubMed:14731392). Recruits transcription factors and coactivators to target gene sites, and activates RNA polymerase II machinery for transcriptional elongation (By similarity). Plays a key role in genome compartmentalization via its association with CTCF and cohesin: recruited to chromatin by CTCF and promotes formation of topologically associating domains (TADs) via its ability to bind acetylated histones, contributing to CTCF boundary formation and enhancer insulation (PubMed:28388437). Also recognizes and binds acetylated non-histone proteins, such as STAT3 (PubMed:28262505). Involved in inflammatory response by regulating differentiation of naive CD4(+) T-cells into T-helper Th17: recognizes and binds STAT3 acetylated at 'Lys-87', promoting STAT3 recruitment to chromatin (PubMed:28262505). In addition to acetylated lysines, also recognizes and binds lysine residues on histones that are both methylated and acetylated on the same side chain to form N6-acetyl-N6-methyllysine (Kacme), an epigenetic mark of active chromatin associated with increased transcriptional initiation (By similarity). Specifically binds histone H4 acetyl-methylated at 'Lys-5' and 'Lys-12' (H4K5acme and H4K12acme, respectively) (By similarity).</text>
</comment>
<comment type="subunit">
    <text evidence="1 9 10">Homodimer (By similarity). Interacts with E2F1 (By similarity). Interacts with (acetylated) STAT3; promoting STAT3 recruitment to chromatin (PubMed:28262505). Interacts with CTCF; promoting BRD2 recruitment to chromatin (PubMed:28388437).</text>
</comment>
<comment type="subcellular location">
    <subcellularLocation>
        <location evidence="11 12">Nucleus</location>
    </subcellularLocation>
    <subcellularLocation>
        <location evidence="10">Chromosome</location>
    </subcellularLocation>
    <text evidence="10">Detected on chromatin and nucleosomes.</text>
</comment>
<comment type="alternative products">
    <event type="alternative splicing"/>
    <isoform>
        <id>Q7JJ13-1</id>
        <name>1</name>
        <sequence type="displayed"/>
    </isoform>
    <isoform>
        <id>Q7JJ13-2</id>
        <name>2</name>
        <sequence type="described" ref="VSP_022601"/>
    </isoform>
</comment>
<comment type="tissue specificity">
    <text evidence="11 12">Predominantly expressed in the testis, followed by ovary, placenta, embryo and to a lower extent in somatic tissues.</text>
</comment>
<comment type="domain">
    <text evidence="1">The first bromo domain specifically recognizes histone H4 acetylated at 'Lys-12' (H4K12ac) (By similarity). It also specifically binds histone H4 acetyl-methylated at 'Lys-5' and 'Lys-12' (H4K5acme and H4K12acme, respectively) (By similarity). The second bromo domain recognizes and binds histone H4 acetylated at 'Lys-5' and 'Lys-12' (H4K5ac and H4K12ac, respectively) (By similarity).</text>
</comment>
<comment type="disruption phenotype">
    <text evidence="7 8">Embryonic lethality by 11.5 days post coitum (dpc) (PubMed:19301389). Before death, embryos are smaller and exhibit abnormalities in the neural tube where the gene is highly expressed (PubMed:19301389). Mice with a hypomorphic allele display severe obesity without type 2 diabetes and are protected from inflammatory diseases (PubMed:19883376).</text>
</comment>
<comment type="similarity">
    <text evidence="16">Belongs to the BET family.</text>
</comment>
<comment type="sequence caution" evidence="16">
    <conflict type="erroneous initiation">
        <sequence resource="EMBL-CDS" id="BAD90273"/>
    </conflict>
</comment>
<organism>
    <name type="scientific">Mus musculus</name>
    <name type="common">Mouse</name>
    <dbReference type="NCBI Taxonomy" id="10090"/>
    <lineage>
        <taxon>Eukaryota</taxon>
        <taxon>Metazoa</taxon>
        <taxon>Chordata</taxon>
        <taxon>Craniata</taxon>
        <taxon>Vertebrata</taxon>
        <taxon>Euteleostomi</taxon>
        <taxon>Mammalia</taxon>
        <taxon>Eutheria</taxon>
        <taxon>Euarchontoglires</taxon>
        <taxon>Glires</taxon>
        <taxon>Rodentia</taxon>
        <taxon>Myomorpha</taxon>
        <taxon>Muroidea</taxon>
        <taxon>Muridae</taxon>
        <taxon>Murinae</taxon>
        <taxon>Mus</taxon>
        <taxon>Mus</taxon>
    </lineage>
</organism>
<proteinExistence type="evidence at protein level"/>